<protein>
    <recommendedName>
        <fullName evidence="1">UPF0298 protein lin2160</fullName>
    </recommendedName>
</protein>
<reference key="1">
    <citation type="journal article" date="2001" name="Science">
        <title>Comparative genomics of Listeria species.</title>
        <authorList>
            <person name="Glaser P."/>
            <person name="Frangeul L."/>
            <person name="Buchrieser C."/>
            <person name="Rusniok C."/>
            <person name="Amend A."/>
            <person name="Baquero F."/>
            <person name="Berche P."/>
            <person name="Bloecker H."/>
            <person name="Brandt P."/>
            <person name="Chakraborty T."/>
            <person name="Charbit A."/>
            <person name="Chetouani F."/>
            <person name="Couve E."/>
            <person name="de Daruvar A."/>
            <person name="Dehoux P."/>
            <person name="Domann E."/>
            <person name="Dominguez-Bernal G."/>
            <person name="Duchaud E."/>
            <person name="Durant L."/>
            <person name="Dussurget O."/>
            <person name="Entian K.-D."/>
            <person name="Fsihi H."/>
            <person name="Garcia-del Portillo F."/>
            <person name="Garrido P."/>
            <person name="Gautier L."/>
            <person name="Goebel W."/>
            <person name="Gomez-Lopez N."/>
            <person name="Hain T."/>
            <person name="Hauf J."/>
            <person name="Jackson D."/>
            <person name="Jones L.-M."/>
            <person name="Kaerst U."/>
            <person name="Kreft J."/>
            <person name="Kuhn M."/>
            <person name="Kunst F."/>
            <person name="Kurapkat G."/>
            <person name="Madueno E."/>
            <person name="Maitournam A."/>
            <person name="Mata Vicente J."/>
            <person name="Ng E."/>
            <person name="Nedjari H."/>
            <person name="Nordsiek G."/>
            <person name="Novella S."/>
            <person name="de Pablos B."/>
            <person name="Perez-Diaz J.-C."/>
            <person name="Purcell R."/>
            <person name="Remmel B."/>
            <person name="Rose M."/>
            <person name="Schlueter T."/>
            <person name="Simoes N."/>
            <person name="Tierrez A."/>
            <person name="Vazquez-Boland J.-A."/>
            <person name="Voss H."/>
            <person name="Wehland J."/>
            <person name="Cossart P."/>
        </authorList>
    </citation>
    <scope>NUCLEOTIDE SEQUENCE [LARGE SCALE GENOMIC DNA]</scope>
    <source>
        <strain>ATCC BAA-680 / CLIP 11262</strain>
    </source>
</reference>
<evidence type="ECO:0000255" key="1">
    <source>
        <dbReference type="HAMAP-Rule" id="MF_01126"/>
    </source>
</evidence>
<name>Y2160_LISIN</name>
<comment type="subcellular location">
    <subcellularLocation>
        <location evidence="1">Cytoplasm</location>
    </subcellularLocation>
</comment>
<comment type="similarity">
    <text evidence="1">Belongs to the UPF0298 family.</text>
</comment>
<gene>
    <name type="ordered locus">lin2160</name>
</gene>
<accession>P60414</accession>
<accession>Q929W3</accession>
<dbReference type="EMBL" id="AL596171">
    <property type="protein sequence ID" value="CAC97390.1"/>
    <property type="molecule type" value="Genomic_DNA"/>
</dbReference>
<dbReference type="PIR" id="AF1702">
    <property type="entry name" value="AF1702"/>
</dbReference>
<dbReference type="RefSeq" id="WP_003726138.1">
    <property type="nucleotide sequence ID" value="NC_003212.1"/>
</dbReference>
<dbReference type="SMR" id="P60414"/>
<dbReference type="STRING" id="272626.gene:17566518"/>
<dbReference type="KEGG" id="lin:lin2160"/>
<dbReference type="eggNOG" id="COG4471">
    <property type="taxonomic scope" value="Bacteria"/>
</dbReference>
<dbReference type="HOGENOM" id="CLU_159890_2_0_9"/>
<dbReference type="OrthoDB" id="2990788at2"/>
<dbReference type="Proteomes" id="UP000002513">
    <property type="component" value="Chromosome"/>
</dbReference>
<dbReference type="GO" id="GO:0005737">
    <property type="term" value="C:cytoplasm"/>
    <property type="evidence" value="ECO:0007669"/>
    <property type="project" value="UniProtKB-SubCell"/>
</dbReference>
<dbReference type="HAMAP" id="MF_01126">
    <property type="entry name" value="UPF0298"/>
    <property type="match status" value="1"/>
</dbReference>
<dbReference type="InterPro" id="IPR016979">
    <property type="entry name" value="DUF2129"/>
</dbReference>
<dbReference type="NCBIfam" id="NF002777">
    <property type="entry name" value="PRK02886.1"/>
    <property type="match status" value="1"/>
</dbReference>
<dbReference type="Pfam" id="PF09902">
    <property type="entry name" value="DUF2129"/>
    <property type="match status" value="1"/>
</dbReference>
<dbReference type="PIRSF" id="PIRSF031653">
    <property type="entry name" value="UCP031653"/>
    <property type="match status" value="1"/>
</dbReference>
<proteinExistence type="inferred from homology"/>
<organism>
    <name type="scientific">Listeria innocua serovar 6a (strain ATCC BAA-680 / CLIP 11262)</name>
    <dbReference type="NCBI Taxonomy" id="272626"/>
    <lineage>
        <taxon>Bacteria</taxon>
        <taxon>Bacillati</taxon>
        <taxon>Bacillota</taxon>
        <taxon>Bacilli</taxon>
        <taxon>Bacillales</taxon>
        <taxon>Listeriaceae</taxon>
        <taxon>Listeria</taxon>
    </lineage>
</organism>
<keyword id="KW-0963">Cytoplasm</keyword>
<sequence length="93" mass="11350">MENDRQAIVVWMNHLKQVRSLKRFGNVHYVSRKLKYAVLYCDMAEVEDISNKVSRFHYVKRVEMSFRPFLKTEYESKKEMMYEHKNEDVQISI</sequence>
<feature type="chain" id="PRO_0000074661" description="UPF0298 protein lin2160">
    <location>
        <begin position="1"/>
        <end position="93"/>
    </location>
</feature>